<proteinExistence type="inferred from homology"/>
<evidence type="ECO:0000305" key="1"/>
<evidence type="ECO:0000305" key="2">
    <source>
    </source>
</evidence>
<name>TCBF_PSESQ</name>
<keyword id="KW-0058">Aromatic hydrocarbons catabolism</keyword>
<keyword id="KW-0520">NAD</keyword>
<keyword id="KW-0560">Oxidoreductase</keyword>
<keyword id="KW-0614">Plasmid</keyword>
<dbReference type="EC" id="1.3.1.32"/>
<dbReference type="EMBL" id="M57629">
    <property type="protein sequence ID" value="AAD13629.1"/>
    <property type="molecule type" value="Genomic_DNA"/>
</dbReference>
<dbReference type="PIR" id="E43673">
    <property type="entry name" value="E43673"/>
</dbReference>
<dbReference type="SMR" id="P27101"/>
<dbReference type="BioCyc" id="MetaCyc:MONOMER-14415"/>
<dbReference type="UniPathway" id="UPA00083"/>
<dbReference type="GO" id="GO:0004022">
    <property type="term" value="F:alcohol dehydrogenase (NAD+) activity"/>
    <property type="evidence" value="ECO:0007669"/>
    <property type="project" value="TreeGrafter"/>
</dbReference>
<dbReference type="GO" id="GO:0018506">
    <property type="term" value="F:maleylacetate reductase activity"/>
    <property type="evidence" value="ECO:0000303"/>
    <property type="project" value="UniProtKB"/>
</dbReference>
<dbReference type="GO" id="GO:0046872">
    <property type="term" value="F:metal ion binding"/>
    <property type="evidence" value="ECO:0007669"/>
    <property type="project" value="InterPro"/>
</dbReference>
<dbReference type="GO" id="GO:0046300">
    <property type="term" value="P:2,4-dichlorophenoxyacetic acid catabolic process"/>
    <property type="evidence" value="ECO:0000303"/>
    <property type="project" value="UniProtKB"/>
</dbReference>
<dbReference type="CDD" id="cd08177">
    <property type="entry name" value="MAR"/>
    <property type="match status" value="1"/>
</dbReference>
<dbReference type="Gene3D" id="3.40.50.1970">
    <property type="match status" value="1"/>
</dbReference>
<dbReference type="Gene3D" id="1.20.1090.10">
    <property type="entry name" value="Dehydroquinate synthase-like - alpha domain"/>
    <property type="match status" value="1"/>
</dbReference>
<dbReference type="InterPro" id="IPR001670">
    <property type="entry name" value="ADH_Fe/GldA"/>
</dbReference>
<dbReference type="InterPro" id="IPR056798">
    <property type="entry name" value="ADH_Fe_C"/>
</dbReference>
<dbReference type="InterPro" id="IPR039697">
    <property type="entry name" value="Alcohol_dehydrogenase_Fe"/>
</dbReference>
<dbReference type="InterPro" id="IPR034786">
    <property type="entry name" value="MAR"/>
</dbReference>
<dbReference type="PANTHER" id="PTHR11496">
    <property type="entry name" value="ALCOHOL DEHYDROGENASE"/>
    <property type="match status" value="1"/>
</dbReference>
<dbReference type="PANTHER" id="PTHR11496:SF102">
    <property type="entry name" value="ALCOHOL DEHYDROGENASE 4"/>
    <property type="match status" value="1"/>
</dbReference>
<dbReference type="Pfam" id="PF25137">
    <property type="entry name" value="ADH_Fe_C"/>
    <property type="match status" value="1"/>
</dbReference>
<dbReference type="Pfam" id="PF00465">
    <property type="entry name" value="Fe-ADH"/>
    <property type="match status" value="1"/>
</dbReference>
<dbReference type="SUPFAM" id="SSF56796">
    <property type="entry name" value="Dehydroquinate synthase-like"/>
    <property type="match status" value="1"/>
</dbReference>
<feature type="chain" id="PRO_0000087849" description="Maleylacetate reductase">
    <location>
        <begin position="1"/>
        <end position="352"/>
    </location>
</feature>
<organism>
    <name type="scientific">Pseudomonas sp. (strain P51)</name>
    <dbReference type="NCBI Taxonomy" id="65067"/>
    <lineage>
        <taxon>Bacteria</taxon>
        <taxon>Pseudomonadati</taxon>
        <taxon>Pseudomonadota</taxon>
        <taxon>Gammaproteobacteria</taxon>
        <taxon>Pseudomonadales</taxon>
        <taxon>Pseudomonadaceae</taxon>
        <taxon>Pseudomonas</taxon>
    </lineage>
</organism>
<accession>P27101</accession>
<reference key="1">
    <citation type="journal article" date="1991" name="J. Bacteriol.">
        <title>Sequence analysis of the Pseudomonas sp. strain P51 tcb gene cluster, which encodes metabolism of chlorinated catechols: evidence for specialization of catechol 1,2-dioxygenases for chlorinated substrates.</title>
        <authorList>
            <person name="van der Meer J.R."/>
            <person name="Eggen R.I."/>
            <person name="Zehnder A.J."/>
            <person name="de Vos W.M."/>
        </authorList>
    </citation>
    <scope>NUCLEOTIDE SEQUENCE [GENOMIC DNA]</scope>
</reference>
<gene>
    <name type="primary">tcbF</name>
</gene>
<geneLocation type="plasmid">
    <name>pP51</name>
</geneLocation>
<protein>
    <recommendedName>
        <fullName>Maleylacetate reductase</fullName>
        <ecNumber>1.3.1.32</ecNumber>
    </recommendedName>
</protein>
<comment type="catalytic activity">
    <reaction>
        <text>3-oxoadipate + NAD(+) = maleylacetate + NADH + H(+)</text>
        <dbReference type="Rhea" id="RHEA:16981"/>
        <dbReference type="ChEBI" id="CHEBI:15378"/>
        <dbReference type="ChEBI" id="CHEBI:15775"/>
        <dbReference type="ChEBI" id="CHEBI:16468"/>
        <dbReference type="ChEBI" id="CHEBI:57540"/>
        <dbReference type="ChEBI" id="CHEBI:57945"/>
        <dbReference type="EC" id="1.3.1.32"/>
    </reaction>
</comment>
<comment type="catalytic activity">
    <reaction>
        <text>3-oxoadipate + NADP(+) = maleylacetate + NADPH + H(+)</text>
        <dbReference type="Rhea" id="RHEA:16985"/>
        <dbReference type="ChEBI" id="CHEBI:15378"/>
        <dbReference type="ChEBI" id="CHEBI:15775"/>
        <dbReference type="ChEBI" id="CHEBI:16468"/>
        <dbReference type="ChEBI" id="CHEBI:57783"/>
        <dbReference type="ChEBI" id="CHEBI:58349"/>
        <dbReference type="EC" id="1.3.1.32"/>
    </reaction>
</comment>
<comment type="pathway">
    <text>Aromatic compound metabolism; 3-chlorocatechol degradation.</text>
</comment>
<comment type="similarity">
    <text evidence="1">Belongs to the iron-containing alcohol dehydrogenase family.</text>
</comment>
<comment type="caution">
    <text evidence="2">Was originally thought to be a trans-dienelactoneisomerase.</text>
</comment>
<sequence length="352" mass="37499">MNFIHDPLTPRVLFGAGRLQSLGEELKLLGIRRVLVISTPEQRELANQVAALIPGSVAGFFDRATMHVPSQIVDQAASVARELGVDSYVAPGGGSTIGLAKMLALHSSLPIVAIPTTYAGSEMTSIYGVTENELKKTGRDRRVLARTVIYDPELTFGLPTGISVTSGLNAIAHAVEGLYAPEVNPILAIMAQQGIAALAKSIPTIRSAPTDLEARSQAQYGAWLCGSVLGNVSMALHHKLCHTLGGTFNLPHAETHTVVLPHALAYNTPAIPRANAWLQEALATREPAQALFDLAKSNGAPVSLQSIGMKEADLDRACELVMSAQYPNPRPLEKHAIANLLRRAYLGEPPQP</sequence>